<accession>Q9N2B6</accession>
<protein>
    <recommendedName>
        <fullName>5-hydroxytryptamine receptor 1E</fullName>
        <shortName>5-HT-1E</shortName>
        <shortName>5-HT1E</shortName>
    </recommendedName>
    <alternativeName>
        <fullName>Serotonin receptor 1E</fullName>
    </alternativeName>
</protein>
<reference key="1">
    <citation type="journal article" date="2004" name="Mol. Biol. Evol.">
        <title>Human-specific amino acid changes found in 103 protein-coding genes.</title>
        <authorList>
            <person name="Kitano T."/>
            <person name="Liu Y.-H."/>
            <person name="Ueda S."/>
            <person name="Saitou N."/>
        </authorList>
    </citation>
    <scope>NUCLEOTIDE SEQUENCE [GENOMIC DNA]</scope>
    <source>
        <strain>Isolate 220</strain>
    </source>
</reference>
<dbReference type="EMBL" id="AB041374">
    <property type="protein sequence ID" value="BAA94459.1"/>
    <property type="molecule type" value="Genomic_DNA"/>
</dbReference>
<dbReference type="SMR" id="Q9N2B6"/>
<dbReference type="STRING" id="9598.ENSPTRP00000056988"/>
<dbReference type="GlyCosmos" id="Q9N2B6">
    <property type="glycosylation" value="2 sites, No reported glycans"/>
</dbReference>
<dbReference type="PaxDb" id="9598-ENSPTRP00000056988"/>
<dbReference type="eggNOG" id="KOG3656">
    <property type="taxonomic scope" value="Eukaryota"/>
</dbReference>
<dbReference type="InParanoid" id="Q9N2B6"/>
<dbReference type="Proteomes" id="UP000002277">
    <property type="component" value="Unplaced"/>
</dbReference>
<dbReference type="GO" id="GO:0030425">
    <property type="term" value="C:dendrite"/>
    <property type="evidence" value="ECO:0000318"/>
    <property type="project" value="GO_Central"/>
</dbReference>
<dbReference type="GO" id="GO:0005886">
    <property type="term" value="C:plasma membrane"/>
    <property type="evidence" value="ECO:0000250"/>
    <property type="project" value="UniProtKB"/>
</dbReference>
<dbReference type="GO" id="GO:0045202">
    <property type="term" value="C:synapse"/>
    <property type="evidence" value="ECO:0007669"/>
    <property type="project" value="GOC"/>
</dbReference>
<dbReference type="GO" id="GO:0004993">
    <property type="term" value="F:G protein-coupled serotonin receptor activity"/>
    <property type="evidence" value="ECO:0000250"/>
    <property type="project" value="UniProtKB"/>
</dbReference>
<dbReference type="GO" id="GO:0001586">
    <property type="term" value="F:Gi/o-coupled serotonin receptor activity"/>
    <property type="evidence" value="ECO:0007669"/>
    <property type="project" value="UniProtKB-ARBA"/>
</dbReference>
<dbReference type="GO" id="GO:0030594">
    <property type="term" value="F:neurotransmitter receptor activity"/>
    <property type="evidence" value="ECO:0000318"/>
    <property type="project" value="GO_Central"/>
</dbReference>
<dbReference type="GO" id="GO:0099589">
    <property type="term" value="F:serotonin receptor activity"/>
    <property type="evidence" value="ECO:0007669"/>
    <property type="project" value="UniProtKB-ARBA"/>
</dbReference>
<dbReference type="GO" id="GO:0007193">
    <property type="term" value="P:adenylate cyclase-inhibiting G protein-coupled receptor signaling pathway"/>
    <property type="evidence" value="ECO:0000250"/>
    <property type="project" value="UniProtKB"/>
</dbReference>
<dbReference type="GO" id="GO:0007198">
    <property type="term" value="P:adenylate cyclase-inhibiting serotonin receptor signaling pathway"/>
    <property type="evidence" value="ECO:0000318"/>
    <property type="project" value="GO_Central"/>
</dbReference>
<dbReference type="GO" id="GO:0007268">
    <property type="term" value="P:chemical synaptic transmission"/>
    <property type="evidence" value="ECO:0000318"/>
    <property type="project" value="GO_Central"/>
</dbReference>
<dbReference type="GO" id="GO:0007187">
    <property type="term" value="P:G protein-coupled receptor signaling pathway, coupled to cyclic nucleotide second messenger"/>
    <property type="evidence" value="ECO:0000318"/>
    <property type="project" value="GO_Central"/>
</dbReference>
<dbReference type="CDD" id="cd15335">
    <property type="entry name" value="7tmA_5-HT1E"/>
    <property type="match status" value="1"/>
</dbReference>
<dbReference type="FunFam" id="1.20.1070.10:FF:000085">
    <property type="entry name" value="5-hydroxytryptamine receptor 1F"/>
    <property type="match status" value="1"/>
</dbReference>
<dbReference type="Gene3D" id="1.20.1070.10">
    <property type="entry name" value="Rhodopsin 7-helix transmembrane proteins"/>
    <property type="match status" value="1"/>
</dbReference>
<dbReference type="InterPro" id="IPR002231">
    <property type="entry name" value="5HT_rcpt"/>
</dbReference>
<dbReference type="InterPro" id="IPR000276">
    <property type="entry name" value="GPCR_Rhodpsn"/>
</dbReference>
<dbReference type="InterPro" id="IPR017452">
    <property type="entry name" value="GPCR_Rhodpsn_7TM"/>
</dbReference>
<dbReference type="PANTHER" id="PTHR24248:SF191">
    <property type="entry name" value="5-HYDROXYTRYPTAMINE RECEPTOR 1A"/>
    <property type="match status" value="1"/>
</dbReference>
<dbReference type="PANTHER" id="PTHR24248">
    <property type="entry name" value="ADRENERGIC RECEPTOR-RELATED G-PROTEIN COUPLED RECEPTOR"/>
    <property type="match status" value="1"/>
</dbReference>
<dbReference type="Pfam" id="PF00001">
    <property type="entry name" value="7tm_1"/>
    <property type="match status" value="1"/>
</dbReference>
<dbReference type="PRINTS" id="PR01101">
    <property type="entry name" value="5HTRECEPTOR"/>
</dbReference>
<dbReference type="PRINTS" id="PR00237">
    <property type="entry name" value="GPCRRHODOPSN"/>
</dbReference>
<dbReference type="SMART" id="SM01381">
    <property type="entry name" value="7TM_GPCR_Srsx"/>
    <property type="match status" value="1"/>
</dbReference>
<dbReference type="SUPFAM" id="SSF81321">
    <property type="entry name" value="Family A G protein-coupled receptor-like"/>
    <property type="match status" value="1"/>
</dbReference>
<dbReference type="PROSITE" id="PS00237">
    <property type="entry name" value="G_PROTEIN_RECEP_F1_1"/>
    <property type="match status" value="1"/>
</dbReference>
<dbReference type="PROSITE" id="PS50262">
    <property type="entry name" value="G_PROTEIN_RECEP_F1_2"/>
    <property type="match status" value="1"/>
</dbReference>
<organism>
    <name type="scientific">Pan troglodytes</name>
    <name type="common">Chimpanzee</name>
    <dbReference type="NCBI Taxonomy" id="9598"/>
    <lineage>
        <taxon>Eukaryota</taxon>
        <taxon>Metazoa</taxon>
        <taxon>Chordata</taxon>
        <taxon>Craniata</taxon>
        <taxon>Vertebrata</taxon>
        <taxon>Euteleostomi</taxon>
        <taxon>Mammalia</taxon>
        <taxon>Eutheria</taxon>
        <taxon>Euarchontoglires</taxon>
        <taxon>Primates</taxon>
        <taxon>Haplorrhini</taxon>
        <taxon>Catarrhini</taxon>
        <taxon>Hominidae</taxon>
        <taxon>Pan</taxon>
    </lineage>
</organism>
<sequence length="363" mass="41444">MNITNCTTEASMAIRPKTITEKMLICMTLVVITTLTTLLNLAVIMAIGTTKKLHQPANYLICSLAVTDLLVAVLVMPLSIIYIVMDRWKLGYFLCEVWLSVDMTCCTCSILHLCVIALDRYWAITNAIEYARKRTAKRAALMILTVWTISIFISMPPLFWRSHRRLSPPPSQCTIQHDHVIYTIYSTLGAFYIPLTLILILYYRIYHAAKSLYQKRGSSRHLSNRSTDSQNSFASCKLTQTFCVSDFSTSDPTTEFEKFHASIRIPPFDNDLDHPGERQQISSTRERKAARILGLILGAFILSWLPFFIKELIVGLSIYTVSSEVADFLTWLGYVNSLINPLLYTSFNEDFKLAFKKLIRCRE</sequence>
<proteinExistence type="inferred from homology"/>
<name>5HT1E_PANTR</name>
<comment type="function">
    <text evidence="2">G-protein coupled receptor for 5-hydroxytryptamine (serotonin). Also functions as a receptor for various alkaloids and psychoactive substances. Ligand binding causes a conformation change that triggers signaling via guanine nucleotide-binding proteins (G proteins) and modulates the activity of downstream effectors, such as adenylate cyclase. HTR1E is coupled to G(i)/G(o) G alpha proteins and mediates inhibitory neurotransmission by inhibiting adenylate cyclase activity.</text>
</comment>
<comment type="subcellular location">
    <subcellularLocation>
        <location evidence="2">Cell membrane</location>
        <topology evidence="2">Multi-pass membrane protein</topology>
    </subcellularLocation>
</comment>
<comment type="similarity">
    <text evidence="5">Belongs to the G-protein coupled receptor 1 family.</text>
</comment>
<keyword id="KW-1003">Cell membrane</keyword>
<keyword id="KW-1015">Disulfide bond</keyword>
<keyword id="KW-0297">G-protein coupled receptor</keyword>
<keyword id="KW-0325">Glycoprotein</keyword>
<keyword id="KW-0472">Membrane</keyword>
<keyword id="KW-0675">Receptor</keyword>
<keyword id="KW-1185">Reference proteome</keyword>
<keyword id="KW-0807">Transducer</keyword>
<keyword id="KW-0812">Transmembrane</keyword>
<keyword id="KW-1133">Transmembrane helix</keyword>
<evidence type="ECO:0000250" key="1">
    <source>
        <dbReference type="UniProtKB" id="P28221"/>
    </source>
</evidence>
<evidence type="ECO:0000250" key="2">
    <source>
        <dbReference type="UniProtKB" id="P28566"/>
    </source>
</evidence>
<evidence type="ECO:0000250" key="3">
    <source>
        <dbReference type="UniProtKB" id="P41595"/>
    </source>
</evidence>
<evidence type="ECO:0000255" key="4"/>
<evidence type="ECO:0000255" key="5">
    <source>
        <dbReference type="PROSITE-ProRule" id="PRU00521"/>
    </source>
</evidence>
<feature type="chain" id="PRO_0000068934" description="5-hydroxytryptamine receptor 1E">
    <location>
        <begin position="1"/>
        <end position="363" status="greater than"/>
    </location>
</feature>
<feature type="topological domain" description="Extracellular" evidence="2">
    <location>
        <begin position="1"/>
        <end position="21"/>
    </location>
</feature>
<feature type="transmembrane region" description="Helical; Name=1" evidence="2">
    <location>
        <begin position="22"/>
        <end position="45"/>
    </location>
</feature>
<feature type="topological domain" description="Cytoplasmic" evidence="2">
    <location>
        <begin position="46"/>
        <end position="59"/>
    </location>
</feature>
<feature type="transmembrane region" description="Helical; Name=2" evidence="2">
    <location>
        <begin position="60"/>
        <end position="84"/>
    </location>
</feature>
<feature type="topological domain" description="Extracellular" evidence="2">
    <location>
        <begin position="85"/>
        <end position="92"/>
    </location>
</feature>
<feature type="transmembrane region" description="Helical; Name=3" evidence="2">
    <location>
        <begin position="93"/>
        <end position="118"/>
    </location>
</feature>
<feature type="topological domain" description="Cytoplasmic" evidence="2">
    <location>
        <begin position="119"/>
        <end position="138"/>
    </location>
</feature>
<feature type="transmembrane region" description="Helical; Name=4" evidence="2">
    <location>
        <begin position="139"/>
        <end position="157"/>
    </location>
</feature>
<feature type="topological domain" description="Extracellular" evidence="2">
    <location>
        <begin position="158"/>
        <end position="179"/>
    </location>
</feature>
<feature type="transmembrane region" description="Helical; Name=5" evidence="2">
    <location>
        <begin position="180"/>
        <end position="203"/>
    </location>
</feature>
<feature type="topological domain" description="Cytoplasmic" evidence="2">
    <location>
        <begin position="204"/>
        <end position="291"/>
    </location>
</feature>
<feature type="transmembrane region" description="Helical; Name=6" evidence="2">
    <location>
        <begin position="292"/>
        <end position="316"/>
    </location>
</feature>
<feature type="topological domain" description="Extracellular" evidence="2">
    <location>
        <begin position="317"/>
        <end position="322"/>
    </location>
</feature>
<feature type="transmembrane region" description="Helical; Name=7" evidence="2">
    <location>
        <begin position="323"/>
        <end position="345"/>
    </location>
</feature>
<feature type="topological domain" description="Cytoplasmic" evidence="2">
    <location>
        <begin position="346"/>
        <end position="363" status="greater than"/>
    </location>
</feature>
<feature type="short sequence motif" description="DRY motif; important for ligand-induced conformation changes" evidence="3">
    <location>
        <begin position="119"/>
        <end position="121"/>
    </location>
</feature>
<feature type="short sequence motif" description="NPxxY motif; important for ligand-induced conformation changes and signaling" evidence="3">
    <location>
        <begin position="340"/>
        <end position="344"/>
    </location>
</feature>
<feature type="binding site" evidence="1">
    <location>
        <position position="102"/>
    </location>
    <ligand>
        <name>serotonin</name>
        <dbReference type="ChEBI" id="CHEBI:350546"/>
    </ligand>
</feature>
<feature type="binding site" evidence="1">
    <location>
        <position position="106"/>
    </location>
    <ligand>
        <name>serotonin</name>
        <dbReference type="ChEBI" id="CHEBI:350546"/>
    </ligand>
</feature>
<feature type="glycosylation site" description="N-linked (GlcNAc...) asparagine" evidence="4">
    <location>
        <position position="2"/>
    </location>
</feature>
<feature type="glycosylation site" description="N-linked (GlcNAc...) asparagine" evidence="4">
    <location>
        <position position="5"/>
    </location>
</feature>
<feature type="disulfide bond" evidence="5">
    <location>
        <begin position="95"/>
        <end position="173"/>
    </location>
</feature>
<feature type="non-terminal residue">
    <location>
        <position position="363"/>
    </location>
</feature>
<gene>
    <name type="primary">HTR1E</name>
</gene>